<accession>B4GXS1</accession>
<feature type="chain" id="PRO_0000390707" description="Serine/threonine-protein phosphatase Pgam5, mitochondrial">
    <location>
        <begin position="1"/>
        <end position="289"/>
    </location>
</feature>
<feature type="transmembrane region" description="Helical" evidence="3">
    <location>
        <begin position="7"/>
        <end position="23"/>
    </location>
</feature>
<keyword id="KW-0378">Hydrolase</keyword>
<keyword id="KW-0472">Membrane</keyword>
<keyword id="KW-0496">Mitochondrion</keyword>
<keyword id="KW-1000">Mitochondrion outer membrane</keyword>
<keyword id="KW-1185">Reference proteome</keyword>
<keyword id="KW-0812">Transmembrane</keyword>
<keyword id="KW-1133">Transmembrane helix</keyword>
<proteinExistence type="inferred from homology"/>
<protein>
    <recommendedName>
        <fullName evidence="2">Serine/threonine-protein phosphatase Pgam5, mitochondrial</fullName>
        <ecNumber>3.1.3.16</ecNumber>
    </recommendedName>
    <alternativeName>
        <fullName evidence="2">Phosphoglycerate mutase family member 5 homolog</fullName>
    </alternativeName>
</protein>
<evidence type="ECO:0000250" key="1"/>
<evidence type="ECO:0000250" key="2">
    <source>
        <dbReference type="UniProtKB" id="O46084"/>
    </source>
</evidence>
<evidence type="ECO:0000255" key="3"/>
<evidence type="ECO:0000312" key="4">
    <source>
        <dbReference type="EMBL" id="EDW27548.1"/>
    </source>
</evidence>
<organism>
    <name type="scientific">Drosophila persimilis</name>
    <name type="common">Fruit fly</name>
    <dbReference type="NCBI Taxonomy" id="7234"/>
    <lineage>
        <taxon>Eukaryota</taxon>
        <taxon>Metazoa</taxon>
        <taxon>Ecdysozoa</taxon>
        <taxon>Arthropoda</taxon>
        <taxon>Hexapoda</taxon>
        <taxon>Insecta</taxon>
        <taxon>Pterygota</taxon>
        <taxon>Neoptera</taxon>
        <taxon>Endopterygota</taxon>
        <taxon>Diptera</taxon>
        <taxon>Brachycera</taxon>
        <taxon>Muscomorpha</taxon>
        <taxon>Ephydroidea</taxon>
        <taxon>Drosophilidae</taxon>
        <taxon>Drosophila</taxon>
        <taxon>Sophophora</taxon>
    </lineage>
</organism>
<reference evidence="4" key="1">
    <citation type="journal article" date="2007" name="Nature">
        <title>Evolution of genes and genomes on the Drosophila phylogeny.</title>
        <authorList>
            <consortium name="Drosophila 12 genomes consortium"/>
        </authorList>
    </citation>
    <scope>NUCLEOTIDE SEQUENCE [LARGE SCALE GENOMIC DNA]</scope>
    <source>
        <strain>MSH-3 / Tucson 14011-0111.49</strain>
    </source>
</reference>
<dbReference type="EC" id="3.1.3.16"/>
<dbReference type="EMBL" id="CH479196">
    <property type="protein sequence ID" value="EDW27548.1"/>
    <property type="molecule type" value="Genomic_DNA"/>
</dbReference>
<dbReference type="SMR" id="B4GXS1"/>
<dbReference type="STRING" id="7234.B4GXS1"/>
<dbReference type="EnsemblMetazoa" id="FBtr0185830">
    <property type="protein sequence ID" value="FBpp0184322"/>
    <property type="gene ID" value="FBgn0157810"/>
</dbReference>
<dbReference type="EnsemblMetazoa" id="XM_002023364.2">
    <property type="protein sequence ID" value="XP_002023400.1"/>
    <property type="gene ID" value="LOC6598375"/>
</dbReference>
<dbReference type="GeneID" id="6598375"/>
<dbReference type="KEGG" id="dpe:6598375"/>
<dbReference type="CTD" id="192111"/>
<dbReference type="eggNOG" id="KOG4609">
    <property type="taxonomic scope" value="Eukaryota"/>
</dbReference>
<dbReference type="HOGENOM" id="CLU_063130_0_1_1"/>
<dbReference type="OMA" id="MPMEMIT"/>
<dbReference type="OrthoDB" id="2118094at2759"/>
<dbReference type="PhylomeDB" id="B4GXS1"/>
<dbReference type="Proteomes" id="UP000008744">
    <property type="component" value="Unassembled WGS sequence"/>
</dbReference>
<dbReference type="GO" id="GO:0005741">
    <property type="term" value="C:mitochondrial outer membrane"/>
    <property type="evidence" value="ECO:0007669"/>
    <property type="project" value="UniProtKB-SubCell"/>
</dbReference>
<dbReference type="GO" id="GO:0019900">
    <property type="term" value="F:kinase binding"/>
    <property type="evidence" value="ECO:0007669"/>
    <property type="project" value="EnsemblMetazoa"/>
</dbReference>
<dbReference type="GO" id="GO:0004721">
    <property type="term" value="F:phosphoprotein phosphatase activity"/>
    <property type="evidence" value="ECO:0000250"/>
    <property type="project" value="UniProtKB"/>
</dbReference>
<dbReference type="GO" id="GO:0043539">
    <property type="term" value="F:protein serine/threonine kinase activator activity"/>
    <property type="evidence" value="ECO:0007669"/>
    <property type="project" value="EnsemblMetazoa"/>
</dbReference>
<dbReference type="GO" id="GO:0004722">
    <property type="term" value="F:protein serine/threonine phosphatase activity"/>
    <property type="evidence" value="ECO:0007669"/>
    <property type="project" value="UniProtKB-EC"/>
</dbReference>
<dbReference type="GO" id="GO:0090141">
    <property type="term" value="P:positive regulation of mitochondrial fission"/>
    <property type="evidence" value="ECO:0007669"/>
    <property type="project" value="EnsemblMetazoa"/>
</dbReference>
<dbReference type="GO" id="GO:0010636">
    <property type="term" value="P:positive regulation of mitochondrial fusion"/>
    <property type="evidence" value="ECO:0007669"/>
    <property type="project" value="EnsemblMetazoa"/>
</dbReference>
<dbReference type="GO" id="GO:0006470">
    <property type="term" value="P:protein dephosphorylation"/>
    <property type="evidence" value="ECO:0000250"/>
    <property type="project" value="UniProtKB"/>
</dbReference>
<dbReference type="GO" id="GO:0072347">
    <property type="term" value="P:response to anesthetic"/>
    <property type="evidence" value="ECO:0007669"/>
    <property type="project" value="EnsemblMetazoa"/>
</dbReference>
<dbReference type="GO" id="GO:0009408">
    <property type="term" value="P:response to heat"/>
    <property type="evidence" value="ECO:0007669"/>
    <property type="project" value="EnsemblMetazoa"/>
</dbReference>
<dbReference type="CDD" id="cd07067">
    <property type="entry name" value="HP_PGM_like"/>
    <property type="match status" value="1"/>
</dbReference>
<dbReference type="FunFam" id="3.40.50.1240:FF:000009">
    <property type="entry name" value="serine/threonine-protein phosphatase PGAM5, mitochondrial isoform X1"/>
    <property type="match status" value="1"/>
</dbReference>
<dbReference type="Gene3D" id="3.40.50.1240">
    <property type="entry name" value="Phosphoglycerate mutase-like"/>
    <property type="match status" value="1"/>
</dbReference>
<dbReference type="InterPro" id="IPR013078">
    <property type="entry name" value="His_Pase_superF_clade-1"/>
</dbReference>
<dbReference type="InterPro" id="IPR029033">
    <property type="entry name" value="His_PPase_superfam"/>
</dbReference>
<dbReference type="InterPro" id="IPR051021">
    <property type="entry name" value="Mito_Ser/Thr_phosphatase"/>
</dbReference>
<dbReference type="PANTHER" id="PTHR20935">
    <property type="entry name" value="PHOSPHOGLYCERATE MUTASE-RELATED"/>
    <property type="match status" value="1"/>
</dbReference>
<dbReference type="PANTHER" id="PTHR20935:SF0">
    <property type="entry name" value="SERINE_THREONINE-PROTEIN PHOSPHATASE PGAM5, MITOCHONDRIAL"/>
    <property type="match status" value="1"/>
</dbReference>
<dbReference type="Pfam" id="PF00300">
    <property type="entry name" value="His_Phos_1"/>
    <property type="match status" value="2"/>
</dbReference>
<dbReference type="SMART" id="SM00855">
    <property type="entry name" value="PGAM"/>
    <property type="match status" value="1"/>
</dbReference>
<dbReference type="SUPFAM" id="SSF53254">
    <property type="entry name" value="Phosphoglycerate mutase-like"/>
    <property type="match status" value="1"/>
</dbReference>
<gene>
    <name evidence="2" type="primary">Pgam5</name>
    <name type="ORF">GL20215</name>
</gene>
<comment type="function">
    <text evidence="2">Displays phosphatase activity for serine/threonine residues, and dephosphorylates and activates Pk92B kinase. Has apparently no phosphoglycerate mutase activity (By similarity).</text>
</comment>
<comment type="catalytic activity">
    <reaction>
        <text>O-phospho-L-seryl-[protein] + H2O = L-seryl-[protein] + phosphate</text>
        <dbReference type="Rhea" id="RHEA:20629"/>
        <dbReference type="Rhea" id="RHEA-COMP:9863"/>
        <dbReference type="Rhea" id="RHEA-COMP:11604"/>
        <dbReference type="ChEBI" id="CHEBI:15377"/>
        <dbReference type="ChEBI" id="CHEBI:29999"/>
        <dbReference type="ChEBI" id="CHEBI:43474"/>
        <dbReference type="ChEBI" id="CHEBI:83421"/>
        <dbReference type="EC" id="3.1.3.16"/>
    </reaction>
</comment>
<comment type="catalytic activity">
    <reaction>
        <text>O-phospho-L-threonyl-[protein] + H2O = L-threonyl-[protein] + phosphate</text>
        <dbReference type="Rhea" id="RHEA:47004"/>
        <dbReference type="Rhea" id="RHEA-COMP:11060"/>
        <dbReference type="Rhea" id="RHEA-COMP:11605"/>
        <dbReference type="ChEBI" id="CHEBI:15377"/>
        <dbReference type="ChEBI" id="CHEBI:30013"/>
        <dbReference type="ChEBI" id="CHEBI:43474"/>
        <dbReference type="ChEBI" id="CHEBI:61977"/>
        <dbReference type="EC" id="3.1.3.16"/>
    </reaction>
</comment>
<comment type="subunit">
    <text evidence="2">Interacts with Pk92B/ASK1.</text>
</comment>
<comment type="subcellular location">
    <subcellularLocation>
        <location evidence="2 3">Mitochondrion outer membrane</location>
        <topology evidence="1">Single-pass membrane protein</topology>
    </subcellularLocation>
</comment>
<comment type="similarity">
    <text evidence="3">Belongs to the phosphoglycerate mutase family. BPG-dependent PGAM subfamily.</text>
</comment>
<name>PGAM5_DROPE</name>
<sequence>MRKFTAFACGTGAGLLTFYLTKLNEPKAAVHNSWTRSEKPVDPCALWDHNWDLRDPKSLVKPVKNDLSQEQNRYNTELEKVVPKHARHIILIRHGEYLDVGDTDETHHLTERGREQAKYTGKRLCELGIKWDKVIASTMVRAQETADIILNEIDYEKTKVKNCAFLREGAPIPPQPPVGHWKPEASQFFRDGARIEAAFRRYFYRAYPDQTKDSYTLLVGHGNVIRYFVCRALQFPPEAWLRISINHASITWLTISPSGNVSIKYLGDTGFMPVNHLTNRIPRAAKNVV</sequence>